<keyword id="KW-0106">Calcium</keyword>
<keyword id="KW-0249">Electron transport</keyword>
<keyword id="KW-0349">Heme</keyword>
<keyword id="KW-0408">Iron</keyword>
<keyword id="KW-0479">Metal-binding</keyword>
<keyword id="KW-0560">Oxidoreductase</keyword>
<keyword id="KW-0574">Periplasm</keyword>
<keyword id="KW-1185">Reference proteome</keyword>
<keyword id="KW-0732">Signal</keyword>
<keyword id="KW-0813">Transport</keyword>
<dbReference type="EC" id="1.7.2.2" evidence="1"/>
<dbReference type="EMBL" id="CP001063">
    <property type="protein sequence ID" value="ACD06649.1"/>
    <property type="molecule type" value="Genomic_DNA"/>
</dbReference>
<dbReference type="RefSeq" id="WP_000196875.1">
    <property type="nucleotide sequence ID" value="NC_010658.1"/>
</dbReference>
<dbReference type="SMR" id="B2TXA4"/>
<dbReference type="STRING" id="344609.SbBS512_E4591"/>
<dbReference type="GeneID" id="93777759"/>
<dbReference type="KEGG" id="sbc:SbBS512_E4591"/>
<dbReference type="HOGENOM" id="CLU_035040_1_0_6"/>
<dbReference type="UniPathway" id="UPA00653"/>
<dbReference type="Proteomes" id="UP000001030">
    <property type="component" value="Chromosome"/>
</dbReference>
<dbReference type="GO" id="GO:0030288">
    <property type="term" value="C:outer membrane-bounded periplasmic space"/>
    <property type="evidence" value="ECO:0007669"/>
    <property type="project" value="TreeGrafter"/>
</dbReference>
<dbReference type="GO" id="GO:0005509">
    <property type="term" value="F:calcium ion binding"/>
    <property type="evidence" value="ECO:0007669"/>
    <property type="project" value="UniProtKB-UniRule"/>
</dbReference>
<dbReference type="GO" id="GO:0020037">
    <property type="term" value="F:heme binding"/>
    <property type="evidence" value="ECO:0007669"/>
    <property type="project" value="InterPro"/>
</dbReference>
<dbReference type="GO" id="GO:0005506">
    <property type="term" value="F:iron ion binding"/>
    <property type="evidence" value="ECO:0007669"/>
    <property type="project" value="UniProtKB-UniRule"/>
</dbReference>
<dbReference type="GO" id="GO:0042279">
    <property type="term" value="F:nitrite reductase (cytochrome, ammonia-forming) activity"/>
    <property type="evidence" value="ECO:0007669"/>
    <property type="project" value="UniProtKB-UniRule"/>
</dbReference>
<dbReference type="GO" id="GO:0019645">
    <property type="term" value="P:anaerobic electron transport chain"/>
    <property type="evidence" value="ECO:0007669"/>
    <property type="project" value="TreeGrafter"/>
</dbReference>
<dbReference type="GO" id="GO:0042128">
    <property type="term" value="P:nitrate assimilation"/>
    <property type="evidence" value="ECO:0007669"/>
    <property type="project" value="UniProtKB-UniRule"/>
</dbReference>
<dbReference type="CDD" id="cd00548">
    <property type="entry name" value="NrfA-like"/>
    <property type="match status" value="1"/>
</dbReference>
<dbReference type="FunFam" id="1.10.1130.10:FF:000002">
    <property type="entry name" value="Cytochrome c-552"/>
    <property type="match status" value="1"/>
</dbReference>
<dbReference type="FunFam" id="1.20.140.10:FF:000014">
    <property type="entry name" value="Cytochrome c-552"/>
    <property type="match status" value="1"/>
</dbReference>
<dbReference type="Gene3D" id="1.20.140.10">
    <property type="entry name" value="Butyryl-CoA Dehydrogenase, subunit A, domain 3"/>
    <property type="match status" value="1"/>
</dbReference>
<dbReference type="Gene3D" id="1.10.1130.10">
    <property type="entry name" value="Flavocytochrome C3, Chain A"/>
    <property type="match status" value="1"/>
</dbReference>
<dbReference type="HAMAP" id="MF_01182">
    <property type="entry name" value="Cytochrom_C552"/>
    <property type="match status" value="1"/>
</dbReference>
<dbReference type="InterPro" id="IPR003321">
    <property type="entry name" value="Cyt_c552"/>
</dbReference>
<dbReference type="InterPro" id="IPR017570">
    <property type="entry name" value="Cyt_c_NO2Rdtase_formate-dep"/>
</dbReference>
<dbReference type="InterPro" id="IPR036280">
    <property type="entry name" value="Multihaem_cyt_sf"/>
</dbReference>
<dbReference type="NCBIfam" id="TIGR03152">
    <property type="entry name" value="cyto_c552_HCOOH"/>
    <property type="match status" value="1"/>
</dbReference>
<dbReference type="NCBIfam" id="NF008339">
    <property type="entry name" value="PRK11125.1"/>
    <property type="match status" value="1"/>
</dbReference>
<dbReference type="PANTHER" id="PTHR30633:SF0">
    <property type="entry name" value="CYTOCHROME C-552"/>
    <property type="match status" value="1"/>
</dbReference>
<dbReference type="PANTHER" id="PTHR30633">
    <property type="entry name" value="CYTOCHROME C-552 RESPIRATORY NITRITE REDUCTASE"/>
    <property type="match status" value="1"/>
</dbReference>
<dbReference type="Pfam" id="PF02335">
    <property type="entry name" value="Cytochrom_C552"/>
    <property type="match status" value="1"/>
</dbReference>
<dbReference type="PIRSF" id="PIRSF000243">
    <property type="entry name" value="Cyt_c552"/>
    <property type="match status" value="1"/>
</dbReference>
<dbReference type="SUPFAM" id="SSF48695">
    <property type="entry name" value="Multiheme cytochromes"/>
    <property type="match status" value="1"/>
</dbReference>
<dbReference type="PROSITE" id="PS51008">
    <property type="entry name" value="MULTIHEME_CYTC"/>
    <property type="match status" value="1"/>
</dbReference>
<feature type="signal peptide" evidence="1">
    <location>
        <begin position="1"/>
        <end position="26"/>
    </location>
</feature>
<feature type="chain" id="PRO_1000138224" description="Cytochrome c-552">
    <location>
        <begin position="27"/>
        <end position="478"/>
    </location>
</feature>
<feature type="binding site" description="axial binding residue" evidence="1">
    <location>
        <position position="94"/>
    </location>
    <ligand>
        <name>heme c</name>
        <dbReference type="ChEBI" id="CHEBI:61717"/>
        <label>3</label>
    </ligand>
    <ligandPart>
        <name>Fe</name>
        <dbReference type="ChEBI" id="CHEBI:18248"/>
    </ligandPart>
</feature>
<feature type="binding site" description="covalent" evidence="1">
    <location>
        <position position="122"/>
    </location>
    <ligand>
        <name>heme</name>
        <dbReference type="ChEBI" id="CHEBI:30413"/>
        <label>1</label>
    </ligand>
</feature>
<feature type="binding site" description="covalent" evidence="1">
    <location>
        <position position="125"/>
    </location>
    <ligand>
        <name>heme</name>
        <dbReference type="ChEBI" id="CHEBI:30413"/>
        <label>1</label>
    </ligand>
</feature>
<feature type="binding site" description="axial binding residue" evidence="1">
    <location>
        <position position="126"/>
    </location>
    <ligand>
        <name>heme</name>
        <dbReference type="ChEBI" id="CHEBI:30413"/>
        <label>1</label>
    </ligand>
    <ligandPart>
        <name>Fe</name>
        <dbReference type="ChEBI" id="CHEBI:18248"/>
    </ligandPart>
</feature>
<feature type="binding site" description="covalent" evidence="1">
    <location>
        <position position="160"/>
    </location>
    <ligand>
        <name>heme c</name>
        <dbReference type="ChEBI" id="CHEBI:61717"/>
        <label>2</label>
    </ligand>
</feature>
<feature type="binding site" description="covalent" evidence="1">
    <location>
        <position position="163"/>
    </location>
    <ligand>
        <name>heme c</name>
        <dbReference type="ChEBI" id="CHEBI:61717"/>
        <label>2</label>
    </ligand>
</feature>
<feature type="binding site" description="axial binding residue" evidence="1">
    <location>
        <position position="164"/>
    </location>
    <ligand>
        <name>heme c</name>
        <dbReference type="ChEBI" id="CHEBI:61717"/>
        <label>2</label>
    </ligand>
    <ligandPart>
        <name>Fe</name>
        <dbReference type="ChEBI" id="CHEBI:18248"/>
    </ligandPart>
</feature>
<feature type="binding site" description="covalent" evidence="1">
    <location>
        <position position="209"/>
    </location>
    <ligand>
        <name>heme c</name>
        <dbReference type="ChEBI" id="CHEBI:61717"/>
        <label>3</label>
    </ligand>
</feature>
<feature type="binding site" description="covalent" evidence="1">
    <location>
        <position position="212"/>
    </location>
    <ligand>
        <name>heme c</name>
        <dbReference type="ChEBI" id="CHEBI:61717"/>
        <label>3</label>
    </ligand>
</feature>
<feature type="binding site" description="axial binding residue" evidence="1">
    <location>
        <position position="213"/>
    </location>
    <ligand>
        <name>heme c</name>
        <dbReference type="ChEBI" id="CHEBI:61717"/>
        <label>3</label>
    </ligand>
    <ligandPart>
        <name>Fe</name>
        <dbReference type="ChEBI" id="CHEBI:18248"/>
    </ligandPart>
</feature>
<feature type="binding site" evidence="1">
    <location>
        <position position="215"/>
    </location>
    <ligand>
        <name>Ca(2+)</name>
        <dbReference type="ChEBI" id="CHEBI:29108"/>
    </ligand>
</feature>
<feature type="binding site" evidence="1">
    <location>
        <position position="216"/>
    </location>
    <ligand>
        <name>Ca(2+)</name>
        <dbReference type="ChEBI" id="CHEBI:29108"/>
    </ligand>
</feature>
<feature type="binding site" evidence="1">
    <location>
        <position position="216"/>
    </location>
    <ligand>
        <name>substrate</name>
    </ligand>
</feature>
<feature type="binding site" evidence="1">
    <location>
        <position position="261"/>
    </location>
    <ligand>
        <name>Ca(2+)</name>
        <dbReference type="ChEBI" id="CHEBI:29108"/>
    </ligand>
</feature>
<feature type="binding site" evidence="1">
    <location>
        <position position="263"/>
    </location>
    <ligand>
        <name>Ca(2+)</name>
        <dbReference type="ChEBI" id="CHEBI:29108"/>
    </ligand>
</feature>
<feature type="binding site" evidence="1">
    <location>
        <position position="264"/>
    </location>
    <ligand>
        <name>substrate</name>
    </ligand>
</feature>
<feature type="binding site" description="axial binding residue" evidence="1">
    <location>
        <position position="275"/>
    </location>
    <ligand>
        <name>heme c</name>
        <dbReference type="ChEBI" id="CHEBI:61717"/>
        <label>5</label>
    </ligand>
    <ligandPart>
        <name>Fe</name>
        <dbReference type="ChEBI" id="CHEBI:18248"/>
    </ligandPart>
</feature>
<feature type="binding site" description="covalent" evidence="1">
    <location>
        <position position="282"/>
    </location>
    <ligand>
        <name>heme c</name>
        <dbReference type="ChEBI" id="CHEBI:61717"/>
        <label>4</label>
    </ligand>
</feature>
<feature type="binding site" description="covalent" evidence="1">
    <location>
        <position position="285"/>
    </location>
    <ligand>
        <name>heme c</name>
        <dbReference type="ChEBI" id="CHEBI:61717"/>
        <label>4</label>
    </ligand>
</feature>
<feature type="binding site" description="axial binding residue" evidence="1">
    <location>
        <position position="286"/>
    </location>
    <ligand>
        <name>heme c</name>
        <dbReference type="ChEBI" id="CHEBI:61717"/>
        <label>4</label>
    </ligand>
    <ligandPart>
        <name>Fe</name>
        <dbReference type="ChEBI" id="CHEBI:18248"/>
    </ligandPart>
</feature>
<feature type="binding site" description="axial binding residue" evidence="1">
    <location>
        <position position="301"/>
    </location>
    <ligand>
        <name>heme c</name>
        <dbReference type="ChEBI" id="CHEBI:61717"/>
        <label>2</label>
    </ligand>
    <ligandPart>
        <name>Fe</name>
        <dbReference type="ChEBI" id="CHEBI:18248"/>
    </ligandPart>
</feature>
<feature type="binding site" description="covalent" evidence="1">
    <location>
        <position position="314"/>
    </location>
    <ligand>
        <name>heme c</name>
        <dbReference type="ChEBI" id="CHEBI:61717"/>
        <label>5</label>
    </ligand>
</feature>
<feature type="binding site" description="covalent" evidence="1">
    <location>
        <position position="317"/>
    </location>
    <ligand>
        <name>heme c</name>
        <dbReference type="ChEBI" id="CHEBI:61717"/>
        <label>5</label>
    </ligand>
</feature>
<feature type="binding site" description="axial binding residue" evidence="1">
    <location>
        <position position="318"/>
    </location>
    <ligand>
        <name>heme c</name>
        <dbReference type="ChEBI" id="CHEBI:61717"/>
        <label>5</label>
    </ligand>
    <ligandPart>
        <name>Fe</name>
        <dbReference type="ChEBI" id="CHEBI:18248"/>
    </ligandPart>
</feature>
<feature type="binding site" description="axial binding residue" evidence="1">
    <location>
        <position position="393"/>
    </location>
    <ligand>
        <name>heme c</name>
        <dbReference type="ChEBI" id="CHEBI:61717"/>
        <label>4</label>
    </ligand>
    <ligandPart>
        <name>Fe</name>
        <dbReference type="ChEBI" id="CHEBI:18248"/>
    </ligandPart>
</feature>
<reference key="1">
    <citation type="submission" date="2008-05" db="EMBL/GenBank/DDBJ databases">
        <title>Complete sequence of Shigella boydii serotype 18 strain BS512.</title>
        <authorList>
            <person name="Rasko D.A."/>
            <person name="Rosovitz M."/>
            <person name="Maurelli A.T."/>
            <person name="Myers G."/>
            <person name="Seshadri R."/>
            <person name="Cer R."/>
            <person name="Jiang L."/>
            <person name="Ravel J."/>
            <person name="Sebastian Y."/>
        </authorList>
    </citation>
    <scope>NUCLEOTIDE SEQUENCE [LARGE SCALE GENOMIC DNA]</scope>
    <source>
        <strain>CDC 3083-94 / BS512</strain>
    </source>
</reference>
<gene>
    <name evidence="1" type="primary">nrfA</name>
    <name type="ordered locus">SbBS512_E4591</name>
</gene>
<evidence type="ECO:0000255" key="1">
    <source>
        <dbReference type="HAMAP-Rule" id="MF_01182"/>
    </source>
</evidence>
<protein>
    <recommendedName>
        <fullName evidence="1">Cytochrome c-552</fullName>
        <ecNumber evidence="1">1.7.2.2</ecNumber>
    </recommendedName>
    <alternativeName>
        <fullName evidence="1">Ammonia-forming cytochrome c nitrite reductase</fullName>
        <shortName evidence="1">Cytochrome c nitrite reductase</shortName>
    </alternativeName>
</protein>
<proteinExistence type="inferred from homology"/>
<name>NRFA_SHIB3</name>
<comment type="function">
    <text evidence="1">Catalyzes the reduction of nitrite to ammonia, consuming six electrons in the process.</text>
</comment>
<comment type="catalytic activity">
    <reaction evidence="1">
        <text>6 Fe(III)-[cytochrome c] + NH4(+) + 2 H2O = 6 Fe(II)-[cytochrome c] + nitrite + 8 H(+)</text>
        <dbReference type="Rhea" id="RHEA:13089"/>
        <dbReference type="Rhea" id="RHEA-COMP:10350"/>
        <dbReference type="Rhea" id="RHEA-COMP:14399"/>
        <dbReference type="ChEBI" id="CHEBI:15377"/>
        <dbReference type="ChEBI" id="CHEBI:15378"/>
        <dbReference type="ChEBI" id="CHEBI:16301"/>
        <dbReference type="ChEBI" id="CHEBI:28938"/>
        <dbReference type="ChEBI" id="CHEBI:29033"/>
        <dbReference type="ChEBI" id="CHEBI:29034"/>
        <dbReference type="EC" id="1.7.2.2"/>
    </reaction>
</comment>
<comment type="cofactor">
    <cofactor evidence="1">
        <name>Ca(2+)</name>
        <dbReference type="ChEBI" id="CHEBI:29108"/>
    </cofactor>
    <text evidence="1">Binds 1 Ca(2+) ion per monomer.</text>
</comment>
<comment type="cofactor">
    <cofactor evidence="1">
        <name>heme c</name>
        <dbReference type="ChEBI" id="CHEBI:61717"/>
    </cofactor>
    <text evidence="1">Binds 5 heme c groups covalently per monomer.</text>
</comment>
<comment type="pathway">
    <text evidence="1">Nitrogen metabolism; nitrate reduction (assimilation).</text>
</comment>
<comment type="subcellular location">
    <subcellularLocation>
        <location evidence="1">Periplasm</location>
    </subcellularLocation>
</comment>
<comment type="similarity">
    <text evidence="1">Belongs to the cytochrome c-552 family.</text>
</comment>
<accession>B2TXA4</accession>
<organism>
    <name type="scientific">Shigella boydii serotype 18 (strain CDC 3083-94 / BS512)</name>
    <dbReference type="NCBI Taxonomy" id="344609"/>
    <lineage>
        <taxon>Bacteria</taxon>
        <taxon>Pseudomonadati</taxon>
        <taxon>Pseudomonadota</taxon>
        <taxon>Gammaproteobacteria</taxon>
        <taxon>Enterobacterales</taxon>
        <taxon>Enterobacteriaceae</taxon>
        <taxon>Shigella</taxon>
    </lineage>
</organism>
<sequence>MTRIKINARRIFSLLIPFFFFTSVHAEQTAAPAKPVTVEAKNETFAPQHPDQYLSWKATSEQSERVDALAEDPRLVILWAGYPFSRDYNKPRGHAFAVTDVRETLRTGAPKNAEDGPLPMACWSCKSPDVARLIQKDGEDGYFHGKWARGGPEIVNNLGCADCHNTASPEFAKGKPELTLSRPYAARAMEAIGKPFEKAGRFDQQSMVCGQCHVEYYFDGKNKAVKFPWDDGMKVENMEQYYDKIAFSDWTNSLSKTPMLKAQHPEYETWTAGIHGKNNVTCIDCHMPKVQNAEGKLYTDHKIGNPFDNFAQTCANCHTQDKAALQKVVAERKQSINDLKIKVEDQLVHAHFEAKAALDAGATEAEMKPIQDDIRHAQWRWDLAIASHGIHMHAPEEGLRMLGTAMDKAADARTKLARLLATKGITHEIQIPDISTKEKAQQAIGLNMEQIKAEKQDFIKTVIPQWEEQARKNGLLSQ</sequence>